<sequence>MNLYNLVRDALRPSYATVSPSVDEPTVDNNFVALSCYATLSVLLYYLQRVKQPYLSMLFHILFCLSQVCMVIWLIFSANFYVSLFAQCMLVVCALGCFLERTILSIKLRSMAPFMSMADNFAIIKTTCNNYVFPVERSSDNLVVLTTSRGIYSNGVFMKGAITVSDNALVVSLFKSHSLLLDRVEHGYDYTVFIYINSVILQNIKPTVSVVNTEFTDVEL</sequence>
<comment type="subcellular location">
    <subcellularLocation>
        <location evidence="4">Host membrane</location>
        <topology evidence="4">Multi-pass membrane protein</topology>
    </subcellularLocation>
</comment>
<accession>A3EXG7</accession>
<feature type="chain" id="PRO_0000291329" description="Non-structural protein 3">
    <location>
        <begin position="1"/>
        <end position="220"/>
    </location>
</feature>
<feature type="transmembrane region" description="Helical" evidence="1">
    <location>
        <begin position="27"/>
        <end position="47"/>
    </location>
</feature>
<feature type="transmembrane region" description="Helical" evidence="1">
    <location>
        <begin position="56"/>
        <end position="76"/>
    </location>
</feature>
<feature type="transmembrane region" description="Helical" evidence="1">
    <location>
        <begin position="80"/>
        <end position="100"/>
    </location>
</feature>
<feature type="domain" description="CoV 3a-like viroporin TM" evidence="2">
    <location>
        <begin position="17"/>
        <end position="116"/>
    </location>
</feature>
<feature type="domain" description="CoV 3a-like viroporin CD" evidence="3">
    <location>
        <begin position="120"/>
        <end position="200"/>
    </location>
</feature>
<reference key="1">
    <citation type="journal article" date="2007" name="J. Virol.">
        <title>Comparative analysis of twelve genomes of three novel group 2c and group 2d coronaviruses reveals unique group and subgroup features.</title>
        <authorList>
            <person name="Woo P.C.Y."/>
            <person name="Wang M."/>
            <person name="Lau S.K.P."/>
            <person name="Xu H.F."/>
            <person name="Poon R.W.S."/>
            <person name="Guo R."/>
            <person name="Wong B.H.L."/>
            <person name="Gao K."/>
            <person name="Tsoi H.-W."/>
            <person name="Huang Y."/>
            <person name="Li K.S.M."/>
            <person name="Lam C.S.F."/>
            <person name="Chan K.-H."/>
            <person name="Zheng B.-J."/>
            <person name="Yuen K.-Y."/>
        </authorList>
    </citation>
    <scope>NUCLEOTIDE SEQUENCE [GENOMIC RNA]</scope>
    <source>
        <strain>Isolate HKU9-1</strain>
    </source>
</reference>
<organism>
    <name type="scientific">Bat coronavirus HKU9</name>
    <name type="common">BtCoV</name>
    <name type="synonym">BtCoV/HKU9</name>
    <dbReference type="NCBI Taxonomy" id="694006"/>
    <lineage>
        <taxon>Viruses</taxon>
        <taxon>Riboviria</taxon>
        <taxon>Orthornavirae</taxon>
        <taxon>Pisuviricota</taxon>
        <taxon>Pisoniviricetes</taxon>
        <taxon>Nidovirales</taxon>
        <taxon>Cornidovirineae</taxon>
        <taxon>Coronaviridae</taxon>
        <taxon>Orthocoronavirinae</taxon>
        <taxon>Betacoronavirus</taxon>
        <taxon>Nobecovirus</taxon>
    </lineage>
</organism>
<name>NS3_BCHK9</name>
<evidence type="ECO:0000255" key="1"/>
<evidence type="ECO:0000255" key="2">
    <source>
        <dbReference type="PROSITE-ProRule" id="PRU01311"/>
    </source>
</evidence>
<evidence type="ECO:0000255" key="3">
    <source>
        <dbReference type="PROSITE-ProRule" id="PRU01312"/>
    </source>
</evidence>
<evidence type="ECO:0000305" key="4"/>
<proteinExistence type="predicted"/>
<keyword id="KW-1043">Host membrane</keyword>
<keyword id="KW-0472">Membrane</keyword>
<keyword id="KW-1185">Reference proteome</keyword>
<keyword id="KW-0812">Transmembrane</keyword>
<keyword id="KW-1133">Transmembrane helix</keyword>
<dbReference type="EMBL" id="EF065513">
    <property type="protein sequence ID" value="ABN10912.1"/>
    <property type="molecule type" value="Genomic_RNA"/>
</dbReference>
<dbReference type="KEGG" id="vg:4836013"/>
<dbReference type="OrthoDB" id="32628at10239"/>
<dbReference type="Proteomes" id="UP000006576">
    <property type="component" value="Genome"/>
</dbReference>
<dbReference type="GO" id="GO:0033644">
    <property type="term" value="C:host cell membrane"/>
    <property type="evidence" value="ECO:0007669"/>
    <property type="project" value="UniProtKB-SubCell"/>
</dbReference>
<dbReference type="GO" id="GO:0016020">
    <property type="term" value="C:membrane"/>
    <property type="evidence" value="ECO:0007669"/>
    <property type="project" value="UniProtKB-KW"/>
</dbReference>
<dbReference type="InterPro" id="IPR046446">
    <property type="entry name" value="a/bCoV_VIROPORIN_3A-like_CD"/>
</dbReference>
<dbReference type="InterPro" id="IPR046445">
    <property type="entry name" value="a/bCoV_VIROPORIN_3A-like_TM"/>
</dbReference>
<dbReference type="PROSITE" id="PS51967">
    <property type="entry name" value="COV_VIROPORIN_3A_CD"/>
    <property type="match status" value="1"/>
</dbReference>
<dbReference type="PROSITE" id="PS51966">
    <property type="entry name" value="COV_VIROPORIN_3A_TM"/>
    <property type="match status" value="1"/>
</dbReference>
<organismHost>
    <name type="scientific">Rousettus leschenaultii</name>
    <name type="common">Leschenault's rousette</name>
    <name type="synonym">Pteropus leschenaultii</name>
    <dbReference type="NCBI Taxonomy" id="9408"/>
</organismHost>
<protein>
    <recommendedName>
        <fullName>Non-structural protein 3</fullName>
        <shortName>ns3</shortName>
    </recommendedName>
    <alternativeName>
        <fullName>Accessory protein 3</fullName>
    </alternativeName>
</protein>
<gene>
    <name type="ORF">3</name>
</gene>